<evidence type="ECO:0000255" key="1">
    <source>
        <dbReference type="HAMAP-Rule" id="MF_00531"/>
    </source>
</evidence>
<evidence type="ECO:0000305" key="2"/>
<comment type="function">
    <text evidence="1">Protein S19 forms a complex with S13 that binds strongly to the 16S ribosomal RNA.</text>
</comment>
<comment type="similarity">
    <text evidence="1">Belongs to the universal ribosomal protein uS19 family.</text>
</comment>
<reference key="1">
    <citation type="journal article" date="2007" name="Science">
        <title>The Calyptogena magnifica chemoautotrophic symbiont genome.</title>
        <authorList>
            <person name="Newton I.L.G."/>
            <person name="Woyke T."/>
            <person name="Auchtung T.A."/>
            <person name="Dilly G.F."/>
            <person name="Dutton R.J."/>
            <person name="Fisher M.C."/>
            <person name="Fontanez K.M."/>
            <person name="Lau E."/>
            <person name="Stewart F.J."/>
            <person name="Richardson P.M."/>
            <person name="Barry K.W."/>
            <person name="Saunders E."/>
            <person name="Detter J.C."/>
            <person name="Wu D."/>
            <person name="Eisen J.A."/>
            <person name="Cavanaugh C.M."/>
        </authorList>
    </citation>
    <scope>NUCLEOTIDE SEQUENCE [LARGE SCALE GENOMIC DNA]</scope>
</reference>
<gene>
    <name evidence="1" type="primary">rpsS</name>
    <name type="ordered locus">Rmag_0169</name>
</gene>
<keyword id="KW-0687">Ribonucleoprotein</keyword>
<keyword id="KW-0689">Ribosomal protein</keyword>
<keyword id="KW-0694">RNA-binding</keyword>
<keyword id="KW-0699">rRNA-binding</keyword>
<sequence>MARSLRKGPFIDEHLIKKVLVAQEKNDRKPIKTWSRRSVVVPEMIGLTIAVHNGRVHVPVSINENMIGHKLGEFAITRTFKGHSGDRKV</sequence>
<name>RS19_RUTMC</name>
<proteinExistence type="inferred from homology"/>
<feature type="chain" id="PRO_1000051118" description="Small ribosomal subunit protein uS19">
    <location>
        <begin position="1"/>
        <end position="89"/>
    </location>
</feature>
<accession>A1AVK4</accession>
<organism>
    <name type="scientific">Ruthia magnifica subsp. Calyptogena magnifica</name>
    <dbReference type="NCBI Taxonomy" id="413404"/>
    <lineage>
        <taxon>Bacteria</taxon>
        <taxon>Pseudomonadati</taxon>
        <taxon>Pseudomonadota</taxon>
        <taxon>Gammaproteobacteria</taxon>
        <taxon>Candidatus Pseudothioglobaceae</taxon>
        <taxon>Candidatus Ruthturnera</taxon>
    </lineage>
</organism>
<dbReference type="EMBL" id="CP000488">
    <property type="protein sequence ID" value="ABL01961.1"/>
    <property type="molecule type" value="Genomic_DNA"/>
</dbReference>
<dbReference type="RefSeq" id="WP_011737587.1">
    <property type="nucleotide sequence ID" value="NC_008610.1"/>
</dbReference>
<dbReference type="SMR" id="A1AVK4"/>
<dbReference type="STRING" id="413404.Rmag_0169"/>
<dbReference type="KEGG" id="rma:Rmag_0169"/>
<dbReference type="eggNOG" id="COG0185">
    <property type="taxonomic scope" value="Bacteria"/>
</dbReference>
<dbReference type="HOGENOM" id="CLU_144911_0_1_6"/>
<dbReference type="OrthoDB" id="9797833at2"/>
<dbReference type="Proteomes" id="UP000002587">
    <property type="component" value="Chromosome"/>
</dbReference>
<dbReference type="GO" id="GO:0005737">
    <property type="term" value="C:cytoplasm"/>
    <property type="evidence" value="ECO:0007669"/>
    <property type="project" value="UniProtKB-ARBA"/>
</dbReference>
<dbReference type="GO" id="GO:0015935">
    <property type="term" value="C:small ribosomal subunit"/>
    <property type="evidence" value="ECO:0007669"/>
    <property type="project" value="InterPro"/>
</dbReference>
<dbReference type="GO" id="GO:0019843">
    <property type="term" value="F:rRNA binding"/>
    <property type="evidence" value="ECO:0007669"/>
    <property type="project" value="UniProtKB-UniRule"/>
</dbReference>
<dbReference type="GO" id="GO:0003735">
    <property type="term" value="F:structural constituent of ribosome"/>
    <property type="evidence" value="ECO:0007669"/>
    <property type="project" value="InterPro"/>
</dbReference>
<dbReference type="GO" id="GO:0000028">
    <property type="term" value="P:ribosomal small subunit assembly"/>
    <property type="evidence" value="ECO:0007669"/>
    <property type="project" value="TreeGrafter"/>
</dbReference>
<dbReference type="GO" id="GO:0006412">
    <property type="term" value="P:translation"/>
    <property type="evidence" value="ECO:0007669"/>
    <property type="project" value="UniProtKB-UniRule"/>
</dbReference>
<dbReference type="FunFam" id="3.30.860.10:FF:000001">
    <property type="entry name" value="30S ribosomal protein S19"/>
    <property type="match status" value="1"/>
</dbReference>
<dbReference type="Gene3D" id="3.30.860.10">
    <property type="entry name" value="30s Ribosomal Protein S19, Chain A"/>
    <property type="match status" value="1"/>
</dbReference>
<dbReference type="HAMAP" id="MF_00531">
    <property type="entry name" value="Ribosomal_uS19"/>
    <property type="match status" value="1"/>
</dbReference>
<dbReference type="InterPro" id="IPR002222">
    <property type="entry name" value="Ribosomal_uS19"/>
</dbReference>
<dbReference type="InterPro" id="IPR005732">
    <property type="entry name" value="Ribosomal_uS19_bac-type"/>
</dbReference>
<dbReference type="InterPro" id="IPR020934">
    <property type="entry name" value="Ribosomal_uS19_CS"/>
</dbReference>
<dbReference type="InterPro" id="IPR023575">
    <property type="entry name" value="Ribosomal_uS19_SF"/>
</dbReference>
<dbReference type="NCBIfam" id="TIGR01050">
    <property type="entry name" value="rpsS_bact"/>
    <property type="match status" value="1"/>
</dbReference>
<dbReference type="PANTHER" id="PTHR11880">
    <property type="entry name" value="RIBOSOMAL PROTEIN S19P FAMILY MEMBER"/>
    <property type="match status" value="1"/>
</dbReference>
<dbReference type="PANTHER" id="PTHR11880:SF8">
    <property type="entry name" value="SMALL RIBOSOMAL SUBUNIT PROTEIN US19M"/>
    <property type="match status" value="1"/>
</dbReference>
<dbReference type="Pfam" id="PF00203">
    <property type="entry name" value="Ribosomal_S19"/>
    <property type="match status" value="1"/>
</dbReference>
<dbReference type="PIRSF" id="PIRSF002144">
    <property type="entry name" value="Ribosomal_S19"/>
    <property type="match status" value="1"/>
</dbReference>
<dbReference type="PRINTS" id="PR00975">
    <property type="entry name" value="RIBOSOMALS19"/>
</dbReference>
<dbReference type="SUPFAM" id="SSF54570">
    <property type="entry name" value="Ribosomal protein S19"/>
    <property type="match status" value="1"/>
</dbReference>
<dbReference type="PROSITE" id="PS00323">
    <property type="entry name" value="RIBOSOMAL_S19"/>
    <property type="match status" value="1"/>
</dbReference>
<protein>
    <recommendedName>
        <fullName evidence="1">Small ribosomal subunit protein uS19</fullName>
    </recommendedName>
    <alternativeName>
        <fullName evidence="2">30S ribosomal protein S19</fullName>
    </alternativeName>
</protein>